<evidence type="ECO:0000250" key="1">
    <source>
        <dbReference type="UniProtKB" id="P10175"/>
    </source>
</evidence>
<evidence type="ECO:0000305" key="2"/>
<reference key="1">
    <citation type="journal article" date="2003" name="Gene">
        <title>A third isoform of cytochrome c oxidase subunit VIII is present in mammals.</title>
        <authorList>
            <person name="Huettemann M."/>
            <person name="Schmidt T.R."/>
            <person name="Grossman L.I."/>
        </authorList>
    </citation>
    <scope>NUCLEOTIDE SEQUENCE [MRNA]</scope>
</reference>
<name>COX8C_EULFU</name>
<organism>
    <name type="scientific">Eulemur fulvus fulvus</name>
    <name type="common">Brown lemur</name>
    <dbReference type="NCBI Taxonomy" id="40322"/>
    <lineage>
        <taxon>Eukaryota</taxon>
        <taxon>Metazoa</taxon>
        <taxon>Chordata</taxon>
        <taxon>Craniata</taxon>
        <taxon>Vertebrata</taxon>
        <taxon>Euteleostomi</taxon>
        <taxon>Mammalia</taxon>
        <taxon>Eutheria</taxon>
        <taxon>Euarchontoglires</taxon>
        <taxon>Primates</taxon>
        <taxon>Strepsirrhini</taxon>
        <taxon>Lemuriformes</taxon>
        <taxon>Lemuridae</taxon>
        <taxon>Eulemur</taxon>
    </lineage>
</organism>
<sequence>MAHLPRVCPFIRRLRVALLCLRPGHRFAHSEPQRQRPASALEMAVGIVVIFSAFLTPSAYVLSNLSQFRRE</sequence>
<proteinExistence type="inferred from homology"/>
<keyword id="KW-0472">Membrane</keyword>
<keyword id="KW-0496">Mitochondrion</keyword>
<keyword id="KW-0999">Mitochondrion inner membrane</keyword>
<keyword id="KW-0809">Transit peptide</keyword>
<keyword id="KW-0812">Transmembrane</keyword>
<keyword id="KW-1133">Transmembrane helix</keyword>
<dbReference type="EMBL" id="AY161006">
    <property type="protein sequence ID" value="AAO26195.1"/>
    <property type="molecule type" value="mRNA"/>
</dbReference>
<dbReference type="SMR" id="Q7YRF4"/>
<dbReference type="UniPathway" id="UPA00705"/>
<dbReference type="GO" id="GO:0005743">
    <property type="term" value="C:mitochondrial inner membrane"/>
    <property type="evidence" value="ECO:0007669"/>
    <property type="project" value="UniProtKB-SubCell"/>
</dbReference>
<dbReference type="GO" id="GO:0045277">
    <property type="term" value="C:respiratory chain complex IV"/>
    <property type="evidence" value="ECO:0007669"/>
    <property type="project" value="InterPro"/>
</dbReference>
<dbReference type="GO" id="GO:0006123">
    <property type="term" value="P:mitochondrial electron transport, cytochrome c to oxygen"/>
    <property type="evidence" value="ECO:0007669"/>
    <property type="project" value="InterPro"/>
</dbReference>
<dbReference type="FunFam" id="4.10.81.10:FF:000002">
    <property type="entry name" value="cytochrome c oxidase subunit 8C, mitochondrial"/>
    <property type="match status" value="1"/>
</dbReference>
<dbReference type="Gene3D" id="4.10.81.10">
    <property type="entry name" value="Cytochrome c oxidase, subunit 8"/>
    <property type="match status" value="1"/>
</dbReference>
<dbReference type="InterPro" id="IPR003205">
    <property type="entry name" value="Cyt_c_oxidase_su8"/>
</dbReference>
<dbReference type="InterPro" id="IPR036548">
    <property type="entry name" value="Cyt_c_oxidase_su8_sf"/>
</dbReference>
<dbReference type="PANTHER" id="PTHR16717">
    <property type="entry name" value="CYTOCHROME C OXIDASE POLYPEPTIDE VIII"/>
    <property type="match status" value="1"/>
</dbReference>
<dbReference type="PANTHER" id="PTHR16717:SF2">
    <property type="entry name" value="CYTOCHROME C OXIDASE SUBUNIT 8C, MITOCHONDRIAL"/>
    <property type="match status" value="1"/>
</dbReference>
<dbReference type="Pfam" id="PF02285">
    <property type="entry name" value="COX8"/>
    <property type="match status" value="1"/>
</dbReference>
<dbReference type="SUPFAM" id="SSF81431">
    <property type="entry name" value="Mitochondrial cytochrome c oxidase subunit VIIIb (aka IX)"/>
    <property type="match status" value="1"/>
</dbReference>
<comment type="function">
    <text evidence="1">Component of the cytochrome c oxidase, the last enzyme in the mitochondrial electron transport chain which drives oxidative phosphorylation. The respiratory chain contains 3 multisubunit complexes succinate dehydrogenase (complex II, CII), ubiquinol-cytochrome c oxidoreductase (cytochrome b-c1 complex, complex III, CIII) and cytochrome c oxidase (complex IV, CIV), that cooperate to transfer electrons derived from NADH and succinate to molecular oxygen, creating an electrochemical gradient over the inner membrane that drives transmembrane transport and the ATP synthase. Cytochrome c oxidase is the component of the respiratory chain that catalyzes the reduction of oxygen to water. Electrons originating from reduced cytochrome c in the intermembrane space (IMS) are transferred via the dinuclear copper A center (CU(A)) of subunit 2 and heme A of subunit 1 to the active site in subunit 1, a binuclear center (BNC) formed by heme A3 and copper B (CU(B)). The BNC reduces molecular oxygen to 2 water molecules using 4 electrons from cytochrome c in the IMS and 4 protons from the mitochondrial matrix.</text>
</comment>
<comment type="pathway">
    <text evidence="1">Energy metabolism; oxidative phosphorylation.</text>
</comment>
<comment type="subunit">
    <text evidence="1">Component of the cytochrome c oxidase (complex IV, CIV), a multisubunit enzyme composed of 14 subunits. The complex is composed of a catalytic core of 3 subunits MT-CO1, MT-CO2 and MT-CO3, encoded in the mitochondrial DNA, and 11 supernumerary subunits COX4I, COX5A, COX5B, COX6A, COX6B, COX6C, COX7A, COX7B, COX7C, COX8 and NDUFA4, which are encoded in the nuclear genome. The complex exists as a monomer or a dimer and forms supercomplexes (SCs) in the inner mitochondrial membrane with NADH-ubiquinone oxidoreductase (complex I, CI) and ubiquinol-cytochrome c oxidoreductase (cytochrome b-c1 complex, complex III, CIII), resulting in different assemblies (supercomplex SCI(1)III(2)IV(1) and megacomplex MCI(2)III(2)IV(2)).</text>
</comment>
<comment type="subcellular location">
    <subcellularLocation>
        <location evidence="1">Mitochondrion inner membrane</location>
        <topology evidence="1">Single-pass membrane protein</topology>
    </subcellularLocation>
</comment>
<comment type="similarity">
    <text evidence="2">Belongs to the cytochrome c oxidase VIII family.</text>
</comment>
<protein>
    <recommendedName>
        <fullName>Cytochrome c oxidase subunit 8C, mitochondrial</fullName>
    </recommendedName>
    <alternativeName>
        <fullName>Cytochrome c oxidase polypeptide 8 isoform 3</fullName>
    </alternativeName>
    <alternativeName>
        <fullName>Cytochrome c oxidase polypeptide VIII isoform 3</fullName>
        <shortName>COX VIII-3</shortName>
    </alternativeName>
    <alternativeName>
        <fullName>Cytochrome c oxidase subunit 8-3</fullName>
    </alternativeName>
</protein>
<accession>Q7YRF4</accession>
<gene>
    <name type="primary">COX8C</name>
</gene>
<feature type="transit peptide" description="Mitochondrion" evidence="1">
    <location>
        <begin position="1"/>
        <end position="28"/>
    </location>
</feature>
<feature type="chain" id="PRO_0000006200" description="Cytochrome c oxidase subunit 8C, mitochondrial">
    <location>
        <begin position="29"/>
        <end position="71"/>
    </location>
</feature>
<feature type="topological domain" description="Mitochondrial matrix" evidence="1">
    <location>
        <begin position="29"/>
        <end position="39"/>
    </location>
</feature>
<feature type="transmembrane region" description="Helical" evidence="1">
    <location>
        <begin position="40"/>
        <end position="63"/>
    </location>
</feature>
<feature type="topological domain" description="Mitochondrial intermembrane" evidence="1">
    <location>
        <begin position="64"/>
        <end position="71"/>
    </location>
</feature>